<sequence>MQDKFIKKRHILEYEDKQLINVKLGITTREDGLSPYPHNAFNMARYIDDSQQNITKHQEMLATVIGFPREQWVFPIQTHENKVVKVTSNDKGTNIDALNDALHGVDALYTYEPNLLLTMCYADCVPIYFYSEKNHFIGLAHAGWRGTVGQIVNALISNIDFDLNDLNVVIGPATSTSYEINDDIKSKFETLPIDINQYIDTRGTDRHGIDLKRANALLLENAGVPKDNIYITNYATSEDLSLFFSYRVEKGNTGRMLAFIGQ</sequence>
<reference key="1">
    <citation type="journal article" date="2005" name="Proc. Natl. Acad. Sci. U.S.A.">
        <title>Whole genome sequence of Staphylococcus saprophyticus reveals the pathogenesis of uncomplicated urinary tract infection.</title>
        <authorList>
            <person name="Kuroda M."/>
            <person name="Yamashita A."/>
            <person name="Hirakawa H."/>
            <person name="Kumano M."/>
            <person name="Morikawa K."/>
            <person name="Higashide M."/>
            <person name="Maruyama A."/>
            <person name="Inose Y."/>
            <person name="Matoba K."/>
            <person name="Toh H."/>
            <person name="Kuhara S."/>
            <person name="Hattori M."/>
            <person name="Ohta T."/>
        </authorList>
    </citation>
    <scope>NUCLEOTIDE SEQUENCE [LARGE SCALE GENOMIC DNA]</scope>
    <source>
        <strain>ATCC 15305 / DSM 20229 / NCIMB 8711 / NCTC 7292 / S-41</strain>
    </source>
</reference>
<accession>Q49WW9</accession>
<name>PURNU_STAS1</name>
<keyword id="KW-0186">Copper</keyword>
<keyword id="KW-0378">Hydrolase</keyword>
<keyword id="KW-0479">Metal-binding</keyword>
<keyword id="KW-0560">Oxidoreductase</keyword>
<keyword id="KW-1185">Reference proteome</keyword>
<keyword id="KW-0808">Transferase</keyword>
<keyword id="KW-0862">Zinc</keyword>
<gene>
    <name type="ordered locus">SSP1584</name>
</gene>
<proteinExistence type="inferred from homology"/>
<dbReference type="EC" id="2.4.2.1" evidence="2"/>
<dbReference type="EC" id="3.5.4.4" evidence="2"/>
<dbReference type="EC" id="2.4.2.28" evidence="2"/>
<dbReference type="EMBL" id="AP008934">
    <property type="protein sequence ID" value="BAE18729.1"/>
    <property type="molecule type" value="Genomic_DNA"/>
</dbReference>
<dbReference type="RefSeq" id="WP_011303323.1">
    <property type="nucleotide sequence ID" value="NC_007350.1"/>
</dbReference>
<dbReference type="SMR" id="Q49WW9"/>
<dbReference type="GeneID" id="3615328"/>
<dbReference type="KEGG" id="ssp:SSP1584"/>
<dbReference type="PATRIC" id="fig|342451.11.peg.1586"/>
<dbReference type="eggNOG" id="COG1496">
    <property type="taxonomic scope" value="Bacteria"/>
</dbReference>
<dbReference type="HOGENOM" id="CLU_065784_0_1_9"/>
<dbReference type="OrthoDB" id="4279at2"/>
<dbReference type="Proteomes" id="UP000006371">
    <property type="component" value="Chromosome"/>
</dbReference>
<dbReference type="GO" id="GO:0004000">
    <property type="term" value="F:adenosine deaminase activity"/>
    <property type="evidence" value="ECO:0007669"/>
    <property type="project" value="RHEA"/>
</dbReference>
<dbReference type="GO" id="GO:0005507">
    <property type="term" value="F:copper ion binding"/>
    <property type="evidence" value="ECO:0007669"/>
    <property type="project" value="TreeGrafter"/>
</dbReference>
<dbReference type="GO" id="GO:0016491">
    <property type="term" value="F:oxidoreductase activity"/>
    <property type="evidence" value="ECO:0007669"/>
    <property type="project" value="UniProtKB-KW"/>
</dbReference>
<dbReference type="GO" id="GO:0017061">
    <property type="term" value="F:S-methyl-5-thioadenosine phosphorylase activity"/>
    <property type="evidence" value="ECO:0007669"/>
    <property type="project" value="UniProtKB-EC"/>
</dbReference>
<dbReference type="CDD" id="cd16833">
    <property type="entry name" value="YfiH"/>
    <property type="match status" value="1"/>
</dbReference>
<dbReference type="Gene3D" id="3.60.140.10">
    <property type="entry name" value="CNF1/YfiH-like putative cysteine hydrolases"/>
    <property type="match status" value="1"/>
</dbReference>
<dbReference type="InterPro" id="IPR003730">
    <property type="entry name" value="Cu_polyphenol_OxRdtase"/>
</dbReference>
<dbReference type="InterPro" id="IPR038371">
    <property type="entry name" value="Cu_polyphenol_OxRdtase_sf"/>
</dbReference>
<dbReference type="InterPro" id="IPR011324">
    <property type="entry name" value="Cytotoxic_necrot_fac-like_cat"/>
</dbReference>
<dbReference type="NCBIfam" id="TIGR00726">
    <property type="entry name" value="peptidoglycan editing factor PgeF"/>
    <property type="match status" value="1"/>
</dbReference>
<dbReference type="PANTHER" id="PTHR30616:SF2">
    <property type="entry name" value="PURINE NUCLEOSIDE PHOSPHORYLASE LACC1"/>
    <property type="match status" value="1"/>
</dbReference>
<dbReference type="PANTHER" id="PTHR30616">
    <property type="entry name" value="UNCHARACTERIZED PROTEIN YFIH"/>
    <property type="match status" value="1"/>
</dbReference>
<dbReference type="Pfam" id="PF02578">
    <property type="entry name" value="Cu-oxidase_4"/>
    <property type="match status" value="1"/>
</dbReference>
<dbReference type="SUPFAM" id="SSF64438">
    <property type="entry name" value="CNF1/YfiH-like putative cysteine hydrolases"/>
    <property type="match status" value="1"/>
</dbReference>
<comment type="function">
    <text evidence="2">Purine nucleoside enzyme that catalyzes the phosphorolysis of adenosine and inosine nucleosides, yielding D-ribose 1-phosphate and the respective free bases, adenine and hypoxanthine. Also catalyzes the phosphorolysis of S-methyl-5'-thioadenosine into adenine and S-methyl-5-thio-alpha-D-ribose 1-phosphate. Also has adenosine deaminase activity.</text>
</comment>
<comment type="catalytic activity">
    <reaction evidence="2">
        <text>adenosine + phosphate = alpha-D-ribose 1-phosphate + adenine</text>
        <dbReference type="Rhea" id="RHEA:27642"/>
        <dbReference type="ChEBI" id="CHEBI:16335"/>
        <dbReference type="ChEBI" id="CHEBI:16708"/>
        <dbReference type="ChEBI" id="CHEBI:43474"/>
        <dbReference type="ChEBI" id="CHEBI:57720"/>
        <dbReference type="EC" id="2.4.2.1"/>
    </reaction>
    <physiologicalReaction direction="left-to-right" evidence="2">
        <dbReference type="Rhea" id="RHEA:27643"/>
    </physiologicalReaction>
</comment>
<comment type="catalytic activity">
    <reaction evidence="2">
        <text>S-methyl-5'-thioadenosine + phosphate = 5-(methylsulfanyl)-alpha-D-ribose 1-phosphate + adenine</text>
        <dbReference type="Rhea" id="RHEA:11852"/>
        <dbReference type="ChEBI" id="CHEBI:16708"/>
        <dbReference type="ChEBI" id="CHEBI:17509"/>
        <dbReference type="ChEBI" id="CHEBI:43474"/>
        <dbReference type="ChEBI" id="CHEBI:58533"/>
        <dbReference type="EC" id="2.4.2.28"/>
    </reaction>
    <physiologicalReaction direction="left-to-right" evidence="2">
        <dbReference type="Rhea" id="RHEA:11853"/>
    </physiologicalReaction>
</comment>
<comment type="catalytic activity">
    <reaction evidence="2">
        <text>inosine + phosphate = alpha-D-ribose 1-phosphate + hypoxanthine</text>
        <dbReference type="Rhea" id="RHEA:27646"/>
        <dbReference type="ChEBI" id="CHEBI:17368"/>
        <dbReference type="ChEBI" id="CHEBI:17596"/>
        <dbReference type="ChEBI" id="CHEBI:43474"/>
        <dbReference type="ChEBI" id="CHEBI:57720"/>
        <dbReference type="EC" id="2.4.2.1"/>
    </reaction>
    <physiologicalReaction direction="left-to-right" evidence="2">
        <dbReference type="Rhea" id="RHEA:27647"/>
    </physiologicalReaction>
</comment>
<comment type="catalytic activity">
    <reaction evidence="2">
        <text>adenosine + H2O + H(+) = inosine + NH4(+)</text>
        <dbReference type="Rhea" id="RHEA:24408"/>
        <dbReference type="ChEBI" id="CHEBI:15377"/>
        <dbReference type="ChEBI" id="CHEBI:15378"/>
        <dbReference type="ChEBI" id="CHEBI:16335"/>
        <dbReference type="ChEBI" id="CHEBI:17596"/>
        <dbReference type="ChEBI" id="CHEBI:28938"/>
        <dbReference type="EC" id="3.5.4.4"/>
    </reaction>
    <physiologicalReaction direction="left-to-right" evidence="2">
        <dbReference type="Rhea" id="RHEA:24409"/>
    </physiologicalReaction>
</comment>
<comment type="cofactor">
    <cofactor evidence="1">
        <name>Cu(2+)</name>
        <dbReference type="ChEBI" id="CHEBI:29036"/>
    </cofactor>
    <cofactor evidence="2">
        <name>Zn(2+)</name>
        <dbReference type="ChEBI" id="CHEBI:29105"/>
    </cofactor>
</comment>
<comment type="subunit">
    <text evidence="3">Homodimer.</text>
</comment>
<comment type="similarity">
    <text evidence="4">Belongs to the purine nucleoside phosphorylase YfiH/LACC1 family.</text>
</comment>
<evidence type="ECO:0000250" key="1">
    <source>
        <dbReference type="UniProtKB" id="P33644"/>
    </source>
</evidence>
<evidence type="ECO:0000250" key="2">
    <source>
        <dbReference type="UniProtKB" id="P84138"/>
    </source>
</evidence>
<evidence type="ECO:0000250" key="3">
    <source>
        <dbReference type="UniProtKB" id="Q1EIR0"/>
    </source>
</evidence>
<evidence type="ECO:0000305" key="4"/>
<organism>
    <name type="scientific">Staphylococcus saprophyticus subsp. saprophyticus (strain ATCC 15305 / DSM 20229 / NCIMB 8711 / NCTC 7292 / S-41)</name>
    <dbReference type="NCBI Taxonomy" id="342451"/>
    <lineage>
        <taxon>Bacteria</taxon>
        <taxon>Bacillati</taxon>
        <taxon>Bacillota</taxon>
        <taxon>Bacilli</taxon>
        <taxon>Bacillales</taxon>
        <taxon>Staphylococcaceae</taxon>
        <taxon>Staphylococcus</taxon>
    </lineage>
</organism>
<protein>
    <recommendedName>
        <fullName>Purine nucleoside phosphorylase SSP1584</fullName>
        <ecNumber evidence="2">2.4.2.1</ecNumber>
    </recommendedName>
    <alternativeName>
        <fullName>Adenosine deaminase SSP1584</fullName>
        <ecNumber evidence="2">3.5.4.4</ecNumber>
    </alternativeName>
    <alternativeName>
        <fullName>S-methyl-5'-thioadenosine phosphorylase SSP1584</fullName>
        <ecNumber evidence="2">2.4.2.28</ecNumber>
    </alternativeName>
</protein>
<feature type="chain" id="PRO_0000163181" description="Purine nucleoside phosphorylase SSP1584">
    <location>
        <begin position="1"/>
        <end position="262"/>
    </location>
</feature>
<feature type="binding site" evidence="2">
    <location>
        <position position="79"/>
    </location>
    <ligand>
        <name>Zn(2+)</name>
        <dbReference type="ChEBI" id="CHEBI:29105"/>
        <note>catalytic</note>
    </ligand>
</feature>
<feature type="binding site" evidence="2">
    <location>
        <position position="124"/>
    </location>
    <ligand>
        <name>Zn(2+)</name>
        <dbReference type="ChEBI" id="CHEBI:29105"/>
        <note>catalytic</note>
    </ligand>
</feature>
<feature type="binding site" evidence="2">
    <location>
        <position position="141"/>
    </location>
    <ligand>
        <name>Zn(2+)</name>
        <dbReference type="ChEBI" id="CHEBI:29105"/>
        <note>catalytic</note>
    </ligand>
</feature>